<feature type="chain" id="PRO_1000099742" description="3-phosphoshikimate 1-carboxyvinyltransferase">
    <location>
        <begin position="1"/>
        <end position="434"/>
    </location>
</feature>
<feature type="active site" description="Proton acceptor" evidence="1">
    <location>
        <position position="320"/>
    </location>
</feature>
<feature type="binding site" evidence="1">
    <location>
        <position position="22"/>
    </location>
    <ligand>
        <name>3-phosphoshikimate</name>
        <dbReference type="ChEBI" id="CHEBI:145989"/>
    </ligand>
</feature>
<feature type="binding site" evidence="1">
    <location>
        <position position="22"/>
    </location>
    <ligand>
        <name>phosphoenolpyruvate</name>
        <dbReference type="ChEBI" id="CHEBI:58702"/>
    </ligand>
</feature>
<feature type="binding site" evidence="1">
    <location>
        <position position="23"/>
    </location>
    <ligand>
        <name>3-phosphoshikimate</name>
        <dbReference type="ChEBI" id="CHEBI:145989"/>
    </ligand>
</feature>
<feature type="binding site" evidence="1">
    <location>
        <position position="27"/>
    </location>
    <ligand>
        <name>3-phosphoshikimate</name>
        <dbReference type="ChEBI" id="CHEBI:145989"/>
    </ligand>
</feature>
<feature type="binding site" evidence="1">
    <location>
        <position position="94"/>
    </location>
    <ligand>
        <name>phosphoenolpyruvate</name>
        <dbReference type="ChEBI" id="CHEBI:58702"/>
    </ligand>
</feature>
<feature type="binding site" evidence="1">
    <location>
        <position position="122"/>
    </location>
    <ligand>
        <name>phosphoenolpyruvate</name>
        <dbReference type="ChEBI" id="CHEBI:58702"/>
    </ligand>
</feature>
<feature type="binding site" evidence="1">
    <location>
        <position position="169"/>
    </location>
    <ligand>
        <name>3-phosphoshikimate</name>
        <dbReference type="ChEBI" id="CHEBI:145989"/>
    </ligand>
</feature>
<feature type="binding site" evidence="1">
    <location>
        <position position="170"/>
    </location>
    <ligand>
        <name>3-phosphoshikimate</name>
        <dbReference type="ChEBI" id="CHEBI:145989"/>
    </ligand>
</feature>
<feature type="binding site" evidence="1">
    <location>
        <position position="171"/>
    </location>
    <ligand>
        <name>3-phosphoshikimate</name>
        <dbReference type="ChEBI" id="CHEBI:145989"/>
    </ligand>
</feature>
<feature type="binding site" evidence="1">
    <location>
        <position position="171"/>
    </location>
    <ligand>
        <name>phosphoenolpyruvate</name>
        <dbReference type="ChEBI" id="CHEBI:58702"/>
    </ligand>
</feature>
<feature type="binding site" evidence="1">
    <location>
        <position position="199"/>
    </location>
    <ligand>
        <name>3-phosphoshikimate</name>
        <dbReference type="ChEBI" id="CHEBI:145989"/>
    </ligand>
</feature>
<feature type="binding site" evidence="1">
    <location>
        <position position="320"/>
    </location>
    <ligand>
        <name>3-phosphoshikimate</name>
        <dbReference type="ChEBI" id="CHEBI:145989"/>
    </ligand>
</feature>
<feature type="binding site" evidence="1">
    <location>
        <position position="347"/>
    </location>
    <ligand>
        <name>3-phosphoshikimate</name>
        <dbReference type="ChEBI" id="CHEBI:145989"/>
    </ligand>
</feature>
<feature type="binding site" evidence="1">
    <location>
        <position position="351"/>
    </location>
    <ligand>
        <name>phosphoenolpyruvate</name>
        <dbReference type="ChEBI" id="CHEBI:58702"/>
    </ligand>
</feature>
<feature type="binding site" evidence="1">
    <location>
        <position position="395"/>
    </location>
    <ligand>
        <name>phosphoenolpyruvate</name>
        <dbReference type="ChEBI" id="CHEBI:58702"/>
    </ligand>
</feature>
<feature type="binding site" evidence="1">
    <location>
        <position position="420"/>
    </location>
    <ligand>
        <name>phosphoenolpyruvate</name>
        <dbReference type="ChEBI" id="CHEBI:58702"/>
    </ligand>
</feature>
<sequence length="434" mass="45808">MEHLDVGPLKTARGTIKLPGSKSISNRVLLLAALAQGETVVRDLLDSDDTRVMLDALGKLGVSVEGQGENAYRVTGTGGRFPNTSADLFMGNAGTAIRPLTAALALQGGEYTLHGVPRMHERPIGDLVDGLRQVGARIDYTGNEGYPPLAIHAAPVKIDAPIRVRGDVSSQFLTALLMALPLVESAGNVTIEVVGELISKPYIEITLNLMARFGVQVARDGWSSFTVPTGVAYTAPGEIFVEGDASSASYFLAAGALGGGPVRVEGVGMSSIQGDVRFADALNRMGANVMAGGNWIEVRGAERDDGKLHAVELDCNHIPDAAMTLAVAALFADGTTTLTNIASWRVKETDRLSAMATELRKLGAEVEEGADYIRVTPPSQWTPPAGGIDTYDDHRMAMAFSLAAFGPVPVRINDPRCVAKTFPEYFTAFGGITA</sequence>
<protein>
    <recommendedName>
        <fullName evidence="1">3-phosphoshikimate 1-carboxyvinyltransferase</fullName>
        <ecNumber evidence="1">2.5.1.19</ecNumber>
    </recommendedName>
    <alternativeName>
        <fullName evidence="1">5-enolpyruvylshikimate-3-phosphate synthase</fullName>
        <shortName evidence="1">EPSP synthase</shortName>
        <shortName evidence="1">EPSPS</shortName>
    </alternativeName>
</protein>
<evidence type="ECO:0000255" key="1">
    <source>
        <dbReference type="HAMAP-Rule" id="MF_00210"/>
    </source>
</evidence>
<accession>B2U886</accession>
<dbReference type="EC" id="2.5.1.19" evidence="1"/>
<dbReference type="EMBL" id="CP001068">
    <property type="protein sequence ID" value="ACD25928.1"/>
    <property type="molecule type" value="Genomic_DNA"/>
</dbReference>
<dbReference type="SMR" id="B2U886"/>
<dbReference type="STRING" id="402626.Rpic_0777"/>
<dbReference type="KEGG" id="rpi:Rpic_0777"/>
<dbReference type="PATRIC" id="fig|402626.5.peg.1973"/>
<dbReference type="eggNOG" id="COG0128">
    <property type="taxonomic scope" value="Bacteria"/>
</dbReference>
<dbReference type="HOGENOM" id="CLU_024321_0_0_4"/>
<dbReference type="UniPathway" id="UPA00053">
    <property type="reaction ID" value="UER00089"/>
</dbReference>
<dbReference type="GO" id="GO:0005737">
    <property type="term" value="C:cytoplasm"/>
    <property type="evidence" value="ECO:0007669"/>
    <property type="project" value="UniProtKB-SubCell"/>
</dbReference>
<dbReference type="GO" id="GO:0003866">
    <property type="term" value="F:3-phosphoshikimate 1-carboxyvinyltransferase activity"/>
    <property type="evidence" value="ECO:0007669"/>
    <property type="project" value="UniProtKB-UniRule"/>
</dbReference>
<dbReference type="GO" id="GO:0008652">
    <property type="term" value="P:amino acid biosynthetic process"/>
    <property type="evidence" value="ECO:0007669"/>
    <property type="project" value="UniProtKB-KW"/>
</dbReference>
<dbReference type="GO" id="GO:0009073">
    <property type="term" value="P:aromatic amino acid family biosynthetic process"/>
    <property type="evidence" value="ECO:0007669"/>
    <property type="project" value="UniProtKB-KW"/>
</dbReference>
<dbReference type="GO" id="GO:0009423">
    <property type="term" value="P:chorismate biosynthetic process"/>
    <property type="evidence" value="ECO:0007669"/>
    <property type="project" value="UniProtKB-UniRule"/>
</dbReference>
<dbReference type="CDD" id="cd01556">
    <property type="entry name" value="EPSP_synthase"/>
    <property type="match status" value="1"/>
</dbReference>
<dbReference type="FunFam" id="3.65.10.10:FF:000003">
    <property type="entry name" value="3-phosphoshikimate 1-carboxyvinyltransferase"/>
    <property type="match status" value="1"/>
</dbReference>
<dbReference type="FunFam" id="3.65.10.10:FF:000004">
    <property type="entry name" value="3-phosphoshikimate 1-carboxyvinyltransferase"/>
    <property type="match status" value="1"/>
</dbReference>
<dbReference type="Gene3D" id="3.65.10.10">
    <property type="entry name" value="Enolpyruvate transferase domain"/>
    <property type="match status" value="2"/>
</dbReference>
<dbReference type="HAMAP" id="MF_00210">
    <property type="entry name" value="EPSP_synth"/>
    <property type="match status" value="1"/>
</dbReference>
<dbReference type="InterPro" id="IPR001986">
    <property type="entry name" value="Enolpyruvate_Tfrase_dom"/>
</dbReference>
<dbReference type="InterPro" id="IPR036968">
    <property type="entry name" value="Enolpyruvate_Tfrase_sf"/>
</dbReference>
<dbReference type="InterPro" id="IPR006264">
    <property type="entry name" value="EPSP_synthase"/>
</dbReference>
<dbReference type="InterPro" id="IPR023193">
    <property type="entry name" value="EPSP_synthase_CS"/>
</dbReference>
<dbReference type="InterPro" id="IPR013792">
    <property type="entry name" value="RNA3'P_cycl/enolpyr_Trfase_a/b"/>
</dbReference>
<dbReference type="NCBIfam" id="TIGR01356">
    <property type="entry name" value="aroA"/>
    <property type="match status" value="1"/>
</dbReference>
<dbReference type="PANTHER" id="PTHR21090">
    <property type="entry name" value="AROM/DEHYDROQUINATE SYNTHASE"/>
    <property type="match status" value="1"/>
</dbReference>
<dbReference type="PANTHER" id="PTHR21090:SF5">
    <property type="entry name" value="PENTAFUNCTIONAL AROM POLYPEPTIDE"/>
    <property type="match status" value="1"/>
</dbReference>
<dbReference type="Pfam" id="PF00275">
    <property type="entry name" value="EPSP_synthase"/>
    <property type="match status" value="1"/>
</dbReference>
<dbReference type="PIRSF" id="PIRSF000505">
    <property type="entry name" value="EPSPS"/>
    <property type="match status" value="1"/>
</dbReference>
<dbReference type="SUPFAM" id="SSF55205">
    <property type="entry name" value="EPT/RTPC-like"/>
    <property type="match status" value="1"/>
</dbReference>
<dbReference type="PROSITE" id="PS00104">
    <property type="entry name" value="EPSP_SYNTHASE_1"/>
    <property type="match status" value="1"/>
</dbReference>
<dbReference type="PROSITE" id="PS00885">
    <property type="entry name" value="EPSP_SYNTHASE_2"/>
    <property type="match status" value="1"/>
</dbReference>
<proteinExistence type="inferred from homology"/>
<keyword id="KW-0028">Amino-acid biosynthesis</keyword>
<keyword id="KW-0057">Aromatic amino acid biosynthesis</keyword>
<keyword id="KW-0963">Cytoplasm</keyword>
<keyword id="KW-0808">Transferase</keyword>
<comment type="function">
    <text evidence="1">Catalyzes the transfer of the enolpyruvyl moiety of phosphoenolpyruvate (PEP) to the 5-hydroxyl of shikimate-3-phosphate (S3P) to produce enolpyruvyl shikimate-3-phosphate and inorganic phosphate.</text>
</comment>
<comment type="catalytic activity">
    <reaction evidence="1">
        <text>3-phosphoshikimate + phosphoenolpyruvate = 5-O-(1-carboxyvinyl)-3-phosphoshikimate + phosphate</text>
        <dbReference type="Rhea" id="RHEA:21256"/>
        <dbReference type="ChEBI" id="CHEBI:43474"/>
        <dbReference type="ChEBI" id="CHEBI:57701"/>
        <dbReference type="ChEBI" id="CHEBI:58702"/>
        <dbReference type="ChEBI" id="CHEBI:145989"/>
        <dbReference type="EC" id="2.5.1.19"/>
    </reaction>
    <physiologicalReaction direction="left-to-right" evidence="1">
        <dbReference type="Rhea" id="RHEA:21257"/>
    </physiologicalReaction>
</comment>
<comment type="pathway">
    <text evidence="1">Metabolic intermediate biosynthesis; chorismate biosynthesis; chorismate from D-erythrose 4-phosphate and phosphoenolpyruvate: step 6/7.</text>
</comment>
<comment type="subunit">
    <text evidence="1">Monomer.</text>
</comment>
<comment type="subcellular location">
    <subcellularLocation>
        <location evidence="1">Cytoplasm</location>
    </subcellularLocation>
</comment>
<comment type="similarity">
    <text evidence="1">Belongs to the EPSP synthase family.</text>
</comment>
<organism>
    <name type="scientific">Ralstonia pickettii (strain 12J)</name>
    <dbReference type="NCBI Taxonomy" id="402626"/>
    <lineage>
        <taxon>Bacteria</taxon>
        <taxon>Pseudomonadati</taxon>
        <taxon>Pseudomonadota</taxon>
        <taxon>Betaproteobacteria</taxon>
        <taxon>Burkholderiales</taxon>
        <taxon>Burkholderiaceae</taxon>
        <taxon>Ralstonia</taxon>
    </lineage>
</organism>
<reference key="1">
    <citation type="submission" date="2008-05" db="EMBL/GenBank/DDBJ databases">
        <title>Complete sequence of chromosome 1 of Ralstonia pickettii 12J.</title>
        <authorList>
            <person name="Lucas S."/>
            <person name="Copeland A."/>
            <person name="Lapidus A."/>
            <person name="Glavina del Rio T."/>
            <person name="Dalin E."/>
            <person name="Tice H."/>
            <person name="Bruce D."/>
            <person name="Goodwin L."/>
            <person name="Pitluck S."/>
            <person name="Meincke L."/>
            <person name="Brettin T."/>
            <person name="Detter J.C."/>
            <person name="Han C."/>
            <person name="Kuske C.R."/>
            <person name="Schmutz J."/>
            <person name="Larimer F."/>
            <person name="Land M."/>
            <person name="Hauser L."/>
            <person name="Kyrpides N."/>
            <person name="Mikhailova N."/>
            <person name="Marsh T."/>
            <person name="Richardson P."/>
        </authorList>
    </citation>
    <scope>NUCLEOTIDE SEQUENCE [LARGE SCALE GENOMIC DNA]</scope>
    <source>
        <strain>12J</strain>
    </source>
</reference>
<gene>
    <name evidence="1" type="primary">aroA</name>
    <name type="ordered locus">Rpic_0777</name>
</gene>
<name>AROA_RALPJ</name>